<reference key="1">
    <citation type="journal article" date="2008" name="BMC Genomics">
        <title>Acidithiobacillus ferrooxidans metabolism: from genome sequence to industrial applications.</title>
        <authorList>
            <person name="Valdes J."/>
            <person name="Pedroso I."/>
            <person name="Quatrini R."/>
            <person name="Dodson R.J."/>
            <person name="Tettelin H."/>
            <person name="Blake R. II"/>
            <person name="Eisen J.A."/>
            <person name="Holmes D.S."/>
        </authorList>
    </citation>
    <scope>NUCLEOTIDE SEQUENCE [LARGE SCALE GENOMIC DNA]</scope>
    <source>
        <strain>ATCC 23270 / DSM 14882 / CIP 104768 / NCIMB 8455</strain>
    </source>
</reference>
<protein>
    <recommendedName>
        <fullName evidence="1">Biotin synthase</fullName>
        <ecNumber evidence="1">2.8.1.6</ecNumber>
    </recommendedName>
</protein>
<evidence type="ECO:0000255" key="1">
    <source>
        <dbReference type="HAMAP-Rule" id="MF_01694"/>
    </source>
</evidence>
<evidence type="ECO:0000255" key="2">
    <source>
        <dbReference type="PROSITE-ProRule" id="PRU01266"/>
    </source>
</evidence>
<keyword id="KW-0001">2Fe-2S</keyword>
<keyword id="KW-0004">4Fe-4S</keyword>
<keyword id="KW-0093">Biotin biosynthesis</keyword>
<keyword id="KW-0408">Iron</keyword>
<keyword id="KW-0411">Iron-sulfur</keyword>
<keyword id="KW-0479">Metal-binding</keyword>
<keyword id="KW-1185">Reference proteome</keyword>
<keyword id="KW-0949">S-adenosyl-L-methionine</keyword>
<keyword id="KW-0808">Transferase</keyword>
<dbReference type="EC" id="2.8.1.6" evidence="1"/>
<dbReference type="EMBL" id="CP001219">
    <property type="protein sequence ID" value="ACK80546.1"/>
    <property type="molecule type" value="Genomic_DNA"/>
</dbReference>
<dbReference type="RefSeq" id="WP_012536051.1">
    <property type="nucleotide sequence ID" value="NC_011761.1"/>
</dbReference>
<dbReference type="SMR" id="B7J403"/>
<dbReference type="STRING" id="243159.AFE_0259"/>
<dbReference type="PaxDb" id="243159-AFE_0259"/>
<dbReference type="GeneID" id="65279641"/>
<dbReference type="KEGG" id="afr:AFE_0259"/>
<dbReference type="eggNOG" id="COG0502">
    <property type="taxonomic scope" value="Bacteria"/>
</dbReference>
<dbReference type="HOGENOM" id="CLU_033172_1_2_6"/>
<dbReference type="UniPathway" id="UPA00078">
    <property type="reaction ID" value="UER00162"/>
</dbReference>
<dbReference type="Proteomes" id="UP000001362">
    <property type="component" value="Chromosome"/>
</dbReference>
<dbReference type="GO" id="GO:0051537">
    <property type="term" value="F:2 iron, 2 sulfur cluster binding"/>
    <property type="evidence" value="ECO:0007669"/>
    <property type="project" value="UniProtKB-KW"/>
</dbReference>
<dbReference type="GO" id="GO:0051539">
    <property type="term" value="F:4 iron, 4 sulfur cluster binding"/>
    <property type="evidence" value="ECO:0007669"/>
    <property type="project" value="UniProtKB-KW"/>
</dbReference>
<dbReference type="GO" id="GO:0004076">
    <property type="term" value="F:biotin synthase activity"/>
    <property type="evidence" value="ECO:0007669"/>
    <property type="project" value="UniProtKB-UniRule"/>
</dbReference>
<dbReference type="GO" id="GO:0005506">
    <property type="term" value="F:iron ion binding"/>
    <property type="evidence" value="ECO:0007669"/>
    <property type="project" value="UniProtKB-UniRule"/>
</dbReference>
<dbReference type="GO" id="GO:0009102">
    <property type="term" value="P:biotin biosynthetic process"/>
    <property type="evidence" value="ECO:0007669"/>
    <property type="project" value="UniProtKB-UniRule"/>
</dbReference>
<dbReference type="CDD" id="cd01335">
    <property type="entry name" value="Radical_SAM"/>
    <property type="match status" value="1"/>
</dbReference>
<dbReference type="Gene3D" id="3.20.20.70">
    <property type="entry name" value="Aldolase class I"/>
    <property type="match status" value="1"/>
</dbReference>
<dbReference type="HAMAP" id="MF_01694">
    <property type="entry name" value="BioB"/>
    <property type="match status" value="1"/>
</dbReference>
<dbReference type="InterPro" id="IPR013785">
    <property type="entry name" value="Aldolase_TIM"/>
</dbReference>
<dbReference type="InterPro" id="IPR010722">
    <property type="entry name" value="BATS_dom"/>
</dbReference>
<dbReference type="InterPro" id="IPR002684">
    <property type="entry name" value="Biotin_synth/BioAB"/>
</dbReference>
<dbReference type="InterPro" id="IPR024177">
    <property type="entry name" value="Biotin_synthase"/>
</dbReference>
<dbReference type="InterPro" id="IPR006638">
    <property type="entry name" value="Elp3/MiaA/NifB-like_rSAM"/>
</dbReference>
<dbReference type="InterPro" id="IPR007197">
    <property type="entry name" value="rSAM"/>
</dbReference>
<dbReference type="NCBIfam" id="TIGR00433">
    <property type="entry name" value="bioB"/>
    <property type="match status" value="1"/>
</dbReference>
<dbReference type="PANTHER" id="PTHR22976">
    <property type="entry name" value="BIOTIN SYNTHASE"/>
    <property type="match status" value="1"/>
</dbReference>
<dbReference type="PANTHER" id="PTHR22976:SF2">
    <property type="entry name" value="BIOTIN SYNTHASE, MITOCHONDRIAL"/>
    <property type="match status" value="1"/>
</dbReference>
<dbReference type="Pfam" id="PF06968">
    <property type="entry name" value="BATS"/>
    <property type="match status" value="1"/>
</dbReference>
<dbReference type="Pfam" id="PF04055">
    <property type="entry name" value="Radical_SAM"/>
    <property type="match status" value="1"/>
</dbReference>
<dbReference type="PIRSF" id="PIRSF001619">
    <property type="entry name" value="Biotin_synth"/>
    <property type="match status" value="1"/>
</dbReference>
<dbReference type="SFLD" id="SFLDF00272">
    <property type="entry name" value="biotin_synthase"/>
    <property type="match status" value="1"/>
</dbReference>
<dbReference type="SFLD" id="SFLDG01278">
    <property type="entry name" value="biotin_synthase_like"/>
    <property type="match status" value="1"/>
</dbReference>
<dbReference type="SMART" id="SM00876">
    <property type="entry name" value="BATS"/>
    <property type="match status" value="1"/>
</dbReference>
<dbReference type="SMART" id="SM00729">
    <property type="entry name" value="Elp3"/>
    <property type="match status" value="1"/>
</dbReference>
<dbReference type="SUPFAM" id="SSF102114">
    <property type="entry name" value="Radical SAM enzymes"/>
    <property type="match status" value="1"/>
</dbReference>
<dbReference type="PROSITE" id="PS51918">
    <property type="entry name" value="RADICAL_SAM"/>
    <property type="match status" value="1"/>
</dbReference>
<sequence>MNNSTALQTLDAILEIYARPFNDLIYAAQQVHRLHFDPNAIQCSTLLSIKTGGCPEDCGYCSQSVHHQTALQAEPLMDLEQVRAAAREAKANGAQRLCMGAAWRSPHDRDIEKVAAMIGVVKEYGLESCVTLGMLKPGQAERLQHAGLDYYNHNLDTSPEFYGEVIHTRSYQDRLDTLEAVRDAGIRICSGGILGMGESRRDRARMLQVLAQLPQAPESIPINALVPIPGTPLEAAEPIDGFEFVRTVAVTRILFPKAYVRLSAGREAMSDELQALAFLAGANSIFLGDRLLTTGNASTGHDQALFNRLGLHRSAD</sequence>
<name>BIOB_ACIF2</name>
<feature type="chain" id="PRO_0000381177" description="Biotin synthase">
    <location>
        <begin position="1"/>
        <end position="316"/>
    </location>
</feature>
<feature type="domain" description="Radical SAM core" evidence="2">
    <location>
        <begin position="39"/>
        <end position="263"/>
    </location>
</feature>
<feature type="binding site" evidence="1">
    <location>
        <position position="54"/>
    </location>
    <ligand>
        <name>[4Fe-4S] cluster</name>
        <dbReference type="ChEBI" id="CHEBI:49883"/>
        <note>4Fe-4S-S-AdoMet</note>
    </ligand>
</feature>
<feature type="binding site" evidence="1">
    <location>
        <position position="58"/>
    </location>
    <ligand>
        <name>[4Fe-4S] cluster</name>
        <dbReference type="ChEBI" id="CHEBI:49883"/>
        <note>4Fe-4S-S-AdoMet</note>
    </ligand>
</feature>
<feature type="binding site" evidence="1">
    <location>
        <position position="61"/>
    </location>
    <ligand>
        <name>[4Fe-4S] cluster</name>
        <dbReference type="ChEBI" id="CHEBI:49883"/>
        <note>4Fe-4S-S-AdoMet</note>
    </ligand>
</feature>
<feature type="binding site" evidence="1">
    <location>
        <position position="98"/>
    </location>
    <ligand>
        <name>[2Fe-2S] cluster</name>
        <dbReference type="ChEBI" id="CHEBI:190135"/>
    </ligand>
</feature>
<feature type="binding site" evidence="1">
    <location>
        <position position="129"/>
    </location>
    <ligand>
        <name>[2Fe-2S] cluster</name>
        <dbReference type="ChEBI" id="CHEBI:190135"/>
    </ligand>
</feature>
<feature type="binding site" evidence="1">
    <location>
        <position position="189"/>
    </location>
    <ligand>
        <name>[2Fe-2S] cluster</name>
        <dbReference type="ChEBI" id="CHEBI:190135"/>
    </ligand>
</feature>
<feature type="binding site" evidence="1">
    <location>
        <position position="261"/>
    </location>
    <ligand>
        <name>[2Fe-2S] cluster</name>
        <dbReference type="ChEBI" id="CHEBI:190135"/>
    </ligand>
</feature>
<comment type="function">
    <text evidence="1">Catalyzes the conversion of dethiobiotin (DTB) to biotin by the insertion of a sulfur atom into dethiobiotin via a radical-based mechanism.</text>
</comment>
<comment type="catalytic activity">
    <reaction evidence="1">
        <text>(4R,5S)-dethiobiotin + (sulfur carrier)-SH + 2 reduced [2Fe-2S]-[ferredoxin] + 2 S-adenosyl-L-methionine = (sulfur carrier)-H + biotin + 2 5'-deoxyadenosine + 2 L-methionine + 2 oxidized [2Fe-2S]-[ferredoxin]</text>
        <dbReference type="Rhea" id="RHEA:22060"/>
        <dbReference type="Rhea" id="RHEA-COMP:10000"/>
        <dbReference type="Rhea" id="RHEA-COMP:10001"/>
        <dbReference type="Rhea" id="RHEA-COMP:14737"/>
        <dbReference type="Rhea" id="RHEA-COMP:14739"/>
        <dbReference type="ChEBI" id="CHEBI:17319"/>
        <dbReference type="ChEBI" id="CHEBI:29917"/>
        <dbReference type="ChEBI" id="CHEBI:33737"/>
        <dbReference type="ChEBI" id="CHEBI:33738"/>
        <dbReference type="ChEBI" id="CHEBI:57586"/>
        <dbReference type="ChEBI" id="CHEBI:57844"/>
        <dbReference type="ChEBI" id="CHEBI:59789"/>
        <dbReference type="ChEBI" id="CHEBI:64428"/>
        <dbReference type="ChEBI" id="CHEBI:149473"/>
        <dbReference type="EC" id="2.8.1.6"/>
    </reaction>
</comment>
<comment type="cofactor">
    <cofactor evidence="1">
        <name>[4Fe-4S] cluster</name>
        <dbReference type="ChEBI" id="CHEBI:49883"/>
    </cofactor>
    <text evidence="1">Binds 1 [4Fe-4S] cluster. The cluster is coordinated with 3 cysteines and an exchangeable S-adenosyl-L-methionine.</text>
</comment>
<comment type="cofactor">
    <cofactor evidence="1">
        <name>[2Fe-2S] cluster</name>
        <dbReference type="ChEBI" id="CHEBI:190135"/>
    </cofactor>
    <text evidence="1">Binds 1 [2Fe-2S] cluster. The cluster is coordinated with 3 cysteines and 1 arginine.</text>
</comment>
<comment type="pathway">
    <text evidence="1">Cofactor biosynthesis; biotin biosynthesis; biotin from 7,8-diaminononanoate: step 2/2.</text>
</comment>
<comment type="subunit">
    <text evidence="1">Homodimer.</text>
</comment>
<comment type="similarity">
    <text evidence="1">Belongs to the radical SAM superfamily. Biotin synthase family.</text>
</comment>
<accession>B7J403</accession>
<proteinExistence type="inferred from homology"/>
<organism>
    <name type="scientific">Acidithiobacillus ferrooxidans (strain ATCC 23270 / DSM 14882 / CIP 104768 / NCIMB 8455)</name>
    <name type="common">Ferrobacillus ferrooxidans (strain ATCC 23270)</name>
    <dbReference type="NCBI Taxonomy" id="243159"/>
    <lineage>
        <taxon>Bacteria</taxon>
        <taxon>Pseudomonadati</taxon>
        <taxon>Pseudomonadota</taxon>
        <taxon>Acidithiobacillia</taxon>
        <taxon>Acidithiobacillales</taxon>
        <taxon>Acidithiobacillaceae</taxon>
        <taxon>Acidithiobacillus</taxon>
    </lineage>
</organism>
<gene>
    <name evidence="1" type="primary">bioB</name>
    <name type="ordered locus">AFE_0259</name>
</gene>